<name>MIAB_CHLPM</name>
<organism>
    <name type="scientific">Chlorobium phaeovibrioides (strain DSM 265 / 1930)</name>
    <name type="common">Prosthecochloris vibrioformis (strain DSM 265)</name>
    <dbReference type="NCBI Taxonomy" id="290318"/>
    <lineage>
        <taxon>Bacteria</taxon>
        <taxon>Pseudomonadati</taxon>
        <taxon>Chlorobiota</taxon>
        <taxon>Chlorobiia</taxon>
        <taxon>Chlorobiales</taxon>
        <taxon>Chlorobiaceae</taxon>
        <taxon>Chlorobium/Pelodictyon group</taxon>
        <taxon>Chlorobium</taxon>
    </lineage>
</organism>
<proteinExistence type="inferred from homology"/>
<sequence length="448" mass="49377">MKHEKGRSFYIHTFGCQMNQADSAIITAILMDGGFRVAGSQEDADIVILNTCAVRENAVERITHQLQFLRGAKRRKKSLLVGVAGCVPQHLKREMLEMFPVIDFLAGPDTYRNLPALIGDAEEGKRPAALEFRIEETYAGIDPLREVGVGAFVPVTRGCNNMCAFCVVPFTRGRERSQPFSAVMDEVRRVVEKGYGEITLLGQNVNSYADPEEGRDFASLLRAVSREAPGCRIRFTTSHPKDISPDLVDAIADSPNICNHVHLPVQSGSSRMLHRMNRGHGIDEYLETVALLRRRIPGVSLTTDLIAGFCGEEDEDHEATLALLREVRYDNAFMFYYSPRFGTAAWKTLADTVPLAVKKQRLQEIIDLQLSISAECLQEAVGSVVDVLAESESRRSTEQLMGRTGTNRAVVFDRGGARPGDRVSVLISKASSATLTGVNQGVLPAFYS</sequence>
<keyword id="KW-0004">4Fe-4S</keyword>
<keyword id="KW-0963">Cytoplasm</keyword>
<keyword id="KW-0408">Iron</keyword>
<keyword id="KW-0411">Iron-sulfur</keyword>
<keyword id="KW-0479">Metal-binding</keyword>
<keyword id="KW-0949">S-adenosyl-L-methionine</keyword>
<keyword id="KW-0808">Transferase</keyword>
<keyword id="KW-0819">tRNA processing</keyword>
<reference key="1">
    <citation type="submission" date="2007-03" db="EMBL/GenBank/DDBJ databases">
        <title>Complete sequence of Prosthecochloris vibrioformis DSM 265.</title>
        <authorList>
            <consortium name="US DOE Joint Genome Institute"/>
            <person name="Copeland A."/>
            <person name="Lucas S."/>
            <person name="Lapidus A."/>
            <person name="Barry K."/>
            <person name="Detter J.C."/>
            <person name="Glavina del Rio T."/>
            <person name="Hammon N."/>
            <person name="Israni S."/>
            <person name="Pitluck S."/>
            <person name="Schmutz J."/>
            <person name="Larimer F."/>
            <person name="Land M."/>
            <person name="Hauser L."/>
            <person name="Mikhailova N."/>
            <person name="Li T."/>
            <person name="Overmann J."/>
            <person name="Schuster S.C."/>
            <person name="Bryant D.A."/>
            <person name="Richardson P."/>
        </authorList>
    </citation>
    <scope>NUCLEOTIDE SEQUENCE [LARGE SCALE GENOMIC DNA]</scope>
    <source>
        <strain>DSM 265 / 1930</strain>
    </source>
</reference>
<gene>
    <name evidence="1" type="primary">miaB</name>
    <name type="ordered locus">Cvib_0303</name>
</gene>
<protein>
    <recommendedName>
        <fullName evidence="1">tRNA-2-methylthio-N(6)-dimethylallyladenosine synthase</fullName>
        <ecNumber evidence="1">2.8.4.3</ecNumber>
    </recommendedName>
    <alternativeName>
        <fullName evidence="1">(Dimethylallyl)adenosine tRNA methylthiotransferase MiaB</fullName>
    </alternativeName>
    <alternativeName>
        <fullName evidence="1">tRNA-i(6)A37 methylthiotransferase</fullName>
    </alternativeName>
</protein>
<comment type="function">
    <text evidence="1">Catalyzes the methylthiolation of N6-(dimethylallyl)adenosine (i(6)A), leading to the formation of 2-methylthio-N6-(dimethylallyl)adenosine (ms(2)i(6)A) at position 37 in tRNAs that read codons beginning with uridine.</text>
</comment>
<comment type="catalytic activity">
    <reaction evidence="1">
        <text>N(6)-dimethylallyladenosine(37) in tRNA + (sulfur carrier)-SH + AH2 + 2 S-adenosyl-L-methionine = 2-methylsulfanyl-N(6)-dimethylallyladenosine(37) in tRNA + (sulfur carrier)-H + 5'-deoxyadenosine + L-methionine + A + S-adenosyl-L-homocysteine + 2 H(+)</text>
        <dbReference type="Rhea" id="RHEA:37067"/>
        <dbReference type="Rhea" id="RHEA-COMP:10375"/>
        <dbReference type="Rhea" id="RHEA-COMP:10376"/>
        <dbReference type="Rhea" id="RHEA-COMP:14737"/>
        <dbReference type="Rhea" id="RHEA-COMP:14739"/>
        <dbReference type="ChEBI" id="CHEBI:13193"/>
        <dbReference type="ChEBI" id="CHEBI:15378"/>
        <dbReference type="ChEBI" id="CHEBI:17319"/>
        <dbReference type="ChEBI" id="CHEBI:17499"/>
        <dbReference type="ChEBI" id="CHEBI:29917"/>
        <dbReference type="ChEBI" id="CHEBI:57844"/>
        <dbReference type="ChEBI" id="CHEBI:57856"/>
        <dbReference type="ChEBI" id="CHEBI:59789"/>
        <dbReference type="ChEBI" id="CHEBI:64428"/>
        <dbReference type="ChEBI" id="CHEBI:74415"/>
        <dbReference type="ChEBI" id="CHEBI:74417"/>
        <dbReference type="EC" id="2.8.4.3"/>
    </reaction>
</comment>
<comment type="cofactor">
    <cofactor evidence="1">
        <name>[4Fe-4S] cluster</name>
        <dbReference type="ChEBI" id="CHEBI:49883"/>
    </cofactor>
    <text evidence="1">Binds 2 [4Fe-4S] clusters. One cluster is coordinated with 3 cysteines and an exchangeable S-adenosyl-L-methionine.</text>
</comment>
<comment type="subunit">
    <text evidence="1">Monomer.</text>
</comment>
<comment type="subcellular location">
    <subcellularLocation>
        <location evidence="1">Cytoplasm</location>
    </subcellularLocation>
</comment>
<comment type="similarity">
    <text evidence="1">Belongs to the methylthiotransferase family. MiaB subfamily.</text>
</comment>
<accession>A4SCW6</accession>
<feature type="chain" id="PRO_0000374457" description="tRNA-2-methylthio-N(6)-dimethylallyladenosine synthase">
    <location>
        <begin position="1"/>
        <end position="448"/>
    </location>
</feature>
<feature type="domain" description="MTTase N-terminal" evidence="1">
    <location>
        <begin position="7"/>
        <end position="123"/>
    </location>
</feature>
<feature type="domain" description="Radical SAM core" evidence="2">
    <location>
        <begin position="145"/>
        <end position="375"/>
    </location>
</feature>
<feature type="domain" description="TRAM" evidence="1">
    <location>
        <begin position="378"/>
        <end position="441"/>
    </location>
</feature>
<feature type="binding site" evidence="1">
    <location>
        <position position="16"/>
    </location>
    <ligand>
        <name>[4Fe-4S] cluster</name>
        <dbReference type="ChEBI" id="CHEBI:49883"/>
        <label>1</label>
    </ligand>
</feature>
<feature type="binding site" evidence="1">
    <location>
        <position position="52"/>
    </location>
    <ligand>
        <name>[4Fe-4S] cluster</name>
        <dbReference type="ChEBI" id="CHEBI:49883"/>
        <label>1</label>
    </ligand>
</feature>
<feature type="binding site" evidence="1">
    <location>
        <position position="86"/>
    </location>
    <ligand>
        <name>[4Fe-4S] cluster</name>
        <dbReference type="ChEBI" id="CHEBI:49883"/>
        <label>1</label>
    </ligand>
</feature>
<feature type="binding site" evidence="1">
    <location>
        <position position="159"/>
    </location>
    <ligand>
        <name>[4Fe-4S] cluster</name>
        <dbReference type="ChEBI" id="CHEBI:49883"/>
        <label>2</label>
        <note>4Fe-4S-S-AdoMet</note>
    </ligand>
</feature>
<feature type="binding site" evidence="1">
    <location>
        <position position="163"/>
    </location>
    <ligand>
        <name>[4Fe-4S] cluster</name>
        <dbReference type="ChEBI" id="CHEBI:49883"/>
        <label>2</label>
        <note>4Fe-4S-S-AdoMet</note>
    </ligand>
</feature>
<feature type="binding site" evidence="1">
    <location>
        <position position="166"/>
    </location>
    <ligand>
        <name>[4Fe-4S] cluster</name>
        <dbReference type="ChEBI" id="CHEBI:49883"/>
        <label>2</label>
        <note>4Fe-4S-S-AdoMet</note>
    </ligand>
</feature>
<dbReference type="EC" id="2.8.4.3" evidence="1"/>
<dbReference type="EMBL" id="CP000607">
    <property type="protein sequence ID" value="ABP36325.1"/>
    <property type="molecule type" value="Genomic_DNA"/>
</dbReference>
<dbReference type="SMR" id="A4SCW6"/>
<dbReference type="STRING" id="290318.Cvib_0303"/>
<dbReference type="KEGG" id="pvi:Cvib_0303"/>
<dbReference type="eggNOG" id="COG0621">
    <property type="taxonomic scope" value="Bacteria"/>
</dbReference>
<dbReference type="HOGENOM" id="CLU_018697_2_0_10"/>
<dbReference type="OrthoDB" id="9805215at2"/>
<dbReference type="GO" id="GO:0005829">
    <property type="term" value="C:cytosol"/>
    <property type="evidence" value="ECO:0007669"/>
    <property type="project" value="TreeGrafter"/>
</dbReference>
<dbReference type="GO" id="GO:0051539">
    <property type="term" value="F:4 iron, 4 sulfur cluster binding"/>
    <property type="evidence" value="ECO:0007669"/>
    <property type="project" value="UniProtKB-UniRule"/>
</dbReference>
<dbReference type="GO" id="GO:0046872">
    <property type="term" value="F:metal ion binding"/>
    <property type="evidence" value="ECO:0007669"/>
    <property type="project" value="UniProtKB-KW"/>
</dbReference>
<dbReference type="GO" id="GO:0035597">
    <property type="term" value="F:N6-isopentenyladenosine methylthiotransferase activity"/>
    <property type="evidence" value="ECO:0007669"/>
    <property type="project" value="TreeGrafter"/>
</dbReference>
<dbReference type="CDD" id="cd01335">
    <property type="entry name" value="Radical_SAM"/>
    <property type="match status" value="1"/>
</dbReference>
<dbReference type="FunFam" id="3.40.50.12160:FF:000003">
    <property type="entry name" value="CDK5 regulatory subunit-associated protein 1"/>
    <property type="match status" value="1"/>
</dbReference>
<dbReference type="FunFam" id="3.80.30.20:FF:000001">
    <property type="entry name" value="tRNA-2-methylthio-N(6)-dimethylallyladenosine synthase 2"/>
    <property type="match status" value="1"/>
</dbReference>
<dbReference type="Gene3D" id="3.40.50.12160">
    <property type="entry name" value="Methylthiotransferase, N-terminal domain"/>
    <property type="match status" value="1"/>
</dbReference>
<dbReference type="Gene3D" id="3.80.30.20">
    <property type="entry name" value="tm_1862 like domain"/>
    <property type="match status" value="1"/>
</dbReference>
<dbReference type="HAMAP" id="MF_01864">
    <property type="entry name" value="tRNA_metthiotr_MiaB"/>
    <property type="match status" value="1"/>
</dbReference>
<dbReference type="InterPro" id="IPR006638">
    <property type="entry name" value="Elp3/MiaA/NifB-like_rSAM"/>
</dbReference>
<dbReference type="InterPro" id="IPR005839">
    <property type="entry name" value="Methylthiotransferase"/>
</dbReference>
<dbReference type="InterPro" id="IPR020612">
    <property type="entry name" value="Methylthiotransferase_CS"/>
</dbReference>
<dbReference type="InterPro" id="IPR013848">
    <property type="entry name" value="Methylthiotransferase_N"/>
</dbReference>
<dbReference type="InterPro" id="IPR038135">
    <property type="entry name" value="Methylthiotransferase_N_sf"/>
</dbReference>
<dbReference type="InterPro" id="IPR006463">
    <property type="entry name" value="MiaB_methiolase"/>
</dbReference>
<dbReference type="InterPro" id="IPR007197">
    <property type="entry name" value="rSAM"/>
</dbReference>
<dbReference type="InterPro" id="IPR023404">
    <property type="entry name" value="rSAM_horseshoe"/>
</dbReference>
<dbReference type="InterPro" id="IPR002792">
    <property type="entry name" value="TRAM_dom"/>
</dbReference>
<dbReference type="NCBIfam" id="TIGR01574">
    <property type="entry name" value="miaB-methiolase"/>
    <property type="match status" value="1"/>
</dbReference>
<dbReference type="NCBIfam" id="TIGR00089">
    <property type="entry name" value="MiaB/RimO family radical SAM methylthiotransferase"/>
    <property type="match status" value="1"/>
</dbReference>
<dbReference type="PANTHER" id="PTHR43020">
    <property type="entry name" value="CDK5 REGULATORY SUBUNIT-ASSOCIATED PROTEIN 1"/>
    <property type="match status" value="1"/>
</dbReference>
<dbReference type="PANTHER" id="PTHR43020:SF2">
    <property type="entry name" value="MITOCHONDRIAL TRNA METHYLTHIOTRANSFERASE CDK5RAP1"/>
    <property type="match status" value="1"/>
</dbReference>
<dbReference type="Pfam" id="PF04055">
    <property type="entry name" value="Radical_SAM"/>
    <property type="match status" value="1"/>
</dbReference>
<dbReference type="Pfam" id="PF01938">
    <property type="entry name" value="TRAM"/>
    <property type="match status" value="1"/>
</dbReference>
<dbReference type="Pfam" id="PF00919">
    <property type="entry name" value="UPF0004"/>
    <property type="match status" value="1"/>
</dbReference>
<dbReference type="SFLD" id="SFLDF00273">
    <property type="entry name" value="(dimethylallyl)adenosine_tRNA"/>
    <property type="match status" value="1"/>
</dbReference>
<dbReference type="SFLD" id="SFLDG01082">
    <property type="entry name" value="B12-binding_domain_containing"/>
    <property type="match status" value="1"/>
</dbReference>
<dbReference type="SFLD" id="SFLDF00413">
    <property type="entry name" value="CDK5RAP1"/>
    <property type="match status" value="1"/>
</dbReference>
<dbReference type="SFLD" id="SFLDG01061">
    <property type="entry name" value="methylthiotransferase"/>
    <property type="match status" value="1"/>
</dbReference>
<dbReference type="SMART" id="SM00729">
    <property type="entry name" value="Elp3"/>
    <property type="match status" value="1"/>
</dbReference>
<dbReference type="SUPFAM" id="SSF102114">
    <property type="entry name" value="Radical SAM enzymes"/>
    <property type="match status" value="1"/>
</dbReference>
<dbReference type="PROSITE" id="PS51449">
    <property type="entry name" value="MTTASE_N"/>
    <property type="match status" value="1"/>
</dbReference>
<dbReference type="PROSITE" id="PS01278">
    <property type="entry name" value="MTTASE_RADICAL"/>
    <property type="match status" value="1"/>
</dbReference>
<dbReference type="PROSITE" id="PS51918">
    <property type="entry name" value="RADICAL_SAM"/>
    <property type="match status" value="1"/>
</dbReference>
<dbReference type="PROSITE" id="PS50926">
    <property type="entry name" value="TRAM"/>
    <property type="match status" value="1"/>
</dbReference>
<evidence type="ECO:0000255" key="1">
    <source>
        <dbReference type="HAMAP-Rule" id="MF_01864"/>
    </source>
</evidence>
<evidence type="ECO:0000255" key="2">
    <source>
        <dbReference type="PROSITE-ProRule" id="PRU01266"/>
    </source>
</evidence>